<feature type="chain" id="PRO_0000375102" description="B3 domain-containing protein REM8">
    <location>
        <begin position="1"/>
        <end position="462"/>
    </location>
</feature>
<feature type="DNA-binding region" description="TF-B3 1" evidence="1">
    <location>
        <begin position="11"/>
        <end position="103"/>
    </location>
</feature>
<feature type="DNA-binding region" description="TF-B3 2" evidence="1">
    <location>
        <begin position="148"/>
        <end position="243"/>
    </location>
</feature>
<feature type="DNA-binding region" description="TF-B3 3" evidence="1">
    <location>
        <begin position="249"/>
        <end position="346"/>
    </location>
</feature>
<feature type="region of interest" description="Disordered" evidence="2">
    <location>
        <begin position="351"/>
        <end position="419"/>
    </location>
</feature>
<feature type="compositionally biased region" description="Basic and acidic residues" evidence="2">
    <location>
        <begin position="369"/>
        <end position="397"/>
    </location>
</feature>
<feature type="compositionally biased region" description="Polar residues" evidence="2">
    <location>
        <begin position="399"/>
        <end position="418"/>
    </location>
</feature>
<keyword id="KW-0238">DNA-binding</keyword>
<keyword id="KW-0539">Nucleus</keyword>
<keyword id="KW-1185">Reference proteome</keyword>
<keyword id="KW-0677">Repeat</keyword>
<keyword id="KW-0804">Transcription</keyword>
<keyword id="KW-0805">Transcription regulation</keyword>
<proteinExistence type="evidence at transcript level"/>
<reference key="1">
    <citation type="submission" date="2002-11" db="EMBL/GenBank/DDBJ databases">
        <title>Nucleotide sequence of the putative Arabidopsis ARF24.</title>
        <authorList>
            <person name="Carabelli M."/>
        </authorList>
    </citation>
    <scope>NUCLEOTIDE SEQUENCE [MRNA]</scope>
    <source>
        <strain>cv. Columbia</strain>
        <tissue>Flower</tissue>
    </source>
</reference>
<reference key="2">
    <citation type="journal article" date="1999" name="Nature">
        <title>Sequence and analysis of chromosome 4 of the plant Arabidopsis thaliana.</title>
        <authorList>
            <person name="Mayer K.F.X."/>
            <person name="Schueller C."/>
            <person name="Wambutt R."/>
            <person name="Murphy G."/>
            <person name="Volckaert G."/>
            <person name="Pohl T."/>
            <person name="Duesterhoeft A."/>
            <person name="Stiekema W."/>
            <person name="Entian K.-D."/>
            <person name="Terryn N."/>
            <person name="Harris B."/>
            <person name="Ansorge W."/>
            <person name="Brandt P."/>
            <person name="Grivell L.A."/>
            <person name="Rieger M."/>
            <person name="Weichselgartner M."/>
            <person name="de Simone V."/>
            <person name="Obermaier B."/>
            <person name="Mache R."/>
            <person name="Mueller M."/>
            <person name="Kreis M."/>
            <person name="Delseny M."/>
            <person name="Puigdomenech P."/>
            <person name="Watson M."/>
            <person name="Schmidtheini T."/>
            <person name="Reichert B."/>
            <person name="Portetelle D."/>
            <person name="Perez-Alonso M."/>
            <person name="Boutry M."/>
            <person name="Bancroft I."/>
            <person name="Vos P."/>
            <person name="Hoheisel J."/>
            <person name="Zimmermann W."/>
            <person name="Wedler H."/>
            <person name="Ridley P."/>
            <person name="Langham S.-A."/>
            <person name="McCullagh B."/>
            <person name="Bilham L."/>
            <person name="Robben J."/>
            <person name="van der Schueren J."/>
            <person name="Grymonprez B."/>
            <person name="Chuang Y.-J."/>
            <person name="Vandenbussche F."/>
            <person name="Braeken M."/>
            <person name="Weltjens I."/>
            <person name="Voet M."/>
            <person name="Bastiaens I."/>
            <person name="Aert R."/>
            <person name="Defoor E."/>
            <person name="Weitzenegger T."/>
            <person name="Bothe G."/>
            <person name="Ramsperger U."/>
            <person name="Hilbert H."/>
            <person name="Braun M."/>
            <person name="Holzer E."/>
            <person name="Brandt A."/>
            <person name="Peters S."/>
            <person name="van Staveren M."/>
            <person name="Dirkse W."/>
            <person name="Mooijman P."/>
            <person name="Klein Lankhorst R."/>
            <person name="Rose M."/>
            <person name="Hauf J."/>
            <person name="Koetter P."/>
            <person name="Berneiser S."/>
            <person name="Hempel S."/>
            <person name="Feldpausch M."/>
            <person name="Lamberth S."/>
            <person name="Van den Daele H."/>
            <person name="De Keyser A."/>
            <person name="Buysshaert C."/>
            <person name="Gielen J."/>
            <person name="Villarroel R."/>
            <person name="De Clercq R."/>
            <person name="van Montagu M."/>
            <person name="Rogers J."/>
            <person name="Cronin A."/>
            <person name="Quail M.A."/>
            <person name="Bray-Allen S."/>
            <person name="Clark L."/>
            <person name="Doggett J."/>
            <person name="Hall S."/>
            <person name="Kay M."/>
            <person name="Lennard N."/>
            <person name="McLay K."/>
            <person name="Mayes R."/>
            <person name="Pettett A."/>
            <person name="Rajandream M.A."/>
            <person name="Lyne M."/>
            <person name="Benes V."/>
            <person name="Rechmann S."/>
            <person name="Borkova D."/>
            <person name="Bloecker H."/>
            <person name="Scharfe M."/>
            <person name="Grimm M."/>
            <person name="Loehnert T.-H."/>
            <person name="Dose S."/>
            <person name="de Haan M."/>
            <person name="Maarse A.C."/>
            <person name="Schaefer M."/>
            <person name="Mueller-Auer S."/>
            <person name="Gabel C."/>
            <person name="Fuchs M."/>
            <person name="Fartmann B."/>
            <person name="Granderath K."/>
            <person name="Dauner D."/>
            <person name="Herzl A."/>
            <person name="Neumann S."/>
            <person name="Argiriou A."/>
            <person name="Vitale D."/>
            <person name="Liguori R."/>
            <person name="Piravandi E."/>
            <person name="Massenet O."/>
            <person name="Quigley F."/>
            <person name="Clabauld G."/>
            <person name="Muendlein A."/>
            <person name="Felber R."/>
            <person name="Schnabl S."/>
            <person name="Hiller R."/>
            <person name="Schmidt W."/>
            <person name="Lecharny A."/>
            <person name="Aubourg S."/>
            <person name="Chefdor F."/>
            <person name="Cooke R."/>
            <person name="Berger C."/>
            <person name="Monfort A."/>
            <person name="Casacuberta E."/>
            <person name="Gibbons T."/>
            <person name="Weber N."/>
            <person name="Vandenbol M."/>
            <person name="Bargues M."/>
            <person name="Terol J."/>
            <person name="Torres A."/>
            <person name="Perez-Perez A."/>
            <person name="Purnelle B."/>
            <person name="Bent E."/>
            <person name="Johnson S."/>
            <person name="Tacon D."/>
            <person name="Jesse T."/>
            <person name="Heijnen L."/>
            <person name="Schwarz S."/>
            <person name="Scholler P."/>
            <person name="Heber S."/>
            <person name="Francs P."/>
            <person name="Bielke C."/>
            <person name="Frishman D."/>
            <person name="Haase D."/>
            <person name="Lemcke K."/>
            <person name="Mewes H.-W."/>
            <person name="Stocker S."/>
            <person name="Zaccaria P."/>
            <person name="Bevan M."/>
            <person name="Wilson R.K."/>
            <person name="de la Bastide M."/>
            <person name="Habermann K."/>
            <person name="Parnell L."/>
            <person name="Dedhia N."/>
            <person name="Gnoj L."/>
            <person name="Schutz K."/>
            <person name="Huang E."/>
            <person name="Spiegel L."/>
            <person name="Sekhon M."/>
            <person name="Murray J."/>
            <person name="Sheet P."/>
            <person name="Cordes M."/>
            <person name="Abu-Threideh J."/>
            <person name="Stoneking T."/>
            <person name="Kalicki J."/>
            <person name="Graves T."/>
            <person name="Harmon G."/>
            <person name="Edwards J."/>
            <person name="Latreille P."/>
            <person name="Courtney L."/>
            <person name="Cloud J."/>
            <person name="Abbott A."/>
            <person name="Scott K."/>
            <person name="Johnson D."/>
            <person name="Minx P."/>
            <person name="Bentley D."/>
            <person name="Fulton B."/>
            <person name="Miller N."/>
            <person name="Greco T."/>
            <person name="Kemp K."/>
            <person name="Kramer J."/>
            <person name="Fulton L."/>
            <person name="Mardis E."/>
            <person name="Dante M."/>
            <person name="Pepin K."/>
            <person name="Hillier L.W."/>
            <person name="Nelson J."/>
            <person name="Spieth J."/>
            <person name="Ryan E."/>
            <person name="Andrews S."/>
            <person name="Geisel C."/>
            <person name="Layman D."/>
            <person name="Du H."/>
            <person name="Ali J."/>
            <person name="Berghoff A."/>
            <person name="Jones K."/>
            <person name="Drone K."/>
            <person name="Cotton M."/>
            <person name="Joshu C."/>
            <person name="Antonoiu B."/>
            <person name="Zidanic M."/>
            <person name="Strong C."/>
            <person name="Sun H."/>
            <person name="Lamar B."/>
            <person name="Yordan C."/>
            <person name="Ma P."/>
            <person name="Zhong J."/>
            <person name="Preston R."/>
            <person name="Vil D."/>
            <person name="Shekher M."/>
            <person name="Matero A."/>
            <person name="Shah R."/>
            <person name="Swaby I.K."/>
            <person name="O'Shaughnessy A."/>
            <person name="Rodriguez M."/>
            <person name="Hoffman J."/>
            <person name="Till S."/>
            <person name="Granat S."/>
            <person name="Shohdy N."/>
            <person name="Hasegawa A."/>
            <person name="Hameed A."/>
            <person name="Lodhi M."/>
            <person name="Johnson A."/>
            <person name="Chen E."/>
            <person name="Marra M.A."/>
            <person name="Martienssen R."/>
            <person name="McCombie W.R."/>
        </authorList>
    </citation>
    <scope>NUCLEOTIDE SEQUENCE [LARGE SCALE GENOMIC DNA]</scope>
    <source>
        <strain>cv. Columbia</strain>
    </source>
</reference>
<reference key="3">
    <citation type="journal article" date="2017" name="Plant J.">
        <title>Araport11: a complete reannotation of the Arabidopsis thaliana reference genome.</title>
        <authorList>
            <person name="Cheng C.Y."/>
            <person name="Krishnakumar V."/>
            <person name="Chan A.P."/>
            <person name="Thibaud-Nissen F."/>
            <person name="Schobel S."/>
            <person name="Town C.D."/>
        </authorList>
    </citation>
    <scope>GENOME REANNOTATION</scope>
    <source>
        <strain>cv. Columbia</strain>
    </source>
</reference>
<reference key="4">
    <citation type="journal article" date="2008" name="Trends Plant Sci.">
        <title>The plant B3 superfamily.</title>
        <authorList>
            <person name="Swaminathan K."/>
            <person name="Peterson K."/>
            <person name="Jack T."/>
        </authorList>
    </citation>
    <scope>GENE FAMILY</scope>
</reference>
<comment type="subcellular location">
    <subcellularLocation>
        <location evidence="1">Nucleus</location>
    </subcellularLocation>
</comment>
<comment type="sequence caution" evidence="3">
    <conflict type="erroneous gene model prediction">
        <sequence resource="EMBL-CDS" id="CAA19755"/>
    </conflict>
</comment>
<comment type="sequence caution" evidence="3">
    <conflict type="erroneous gene model prediction">
        <sequence resource="EMBL-CDS" id="CAB79886"/>
    </conflict>
</comment>
<name>REM8_ARATH</name>
<dbReference type="EMBL" id="AL031004">
    <property type="protein sequence ID" value="CAA19755.1"/>
    <property type="status" value="ALT_SEQ"/>
    <property type="molecule type" value="Genomic_DNA"/>
</dbReference>
<dbReference type="EMBL" id="AL161579">
    <property type="protein sequence ID" value="CAB79886.1"/>
    <property type="status" value="ALT_SEQ"/>
    <property type="molecule type" value="Genomic_DNA"/>
</dbReference>
<dbReference type="EMBL" id="CP002687">
    <property type="protein sequence ID" value="AEE85944.1"/>
    <property type="molecule type" value="Genomic_DNA"/>
</dbReference>
<dbReference type="EMBL" id="AJ515262">
    <property type="protein sequence ID" value="CAD56214.1"/>
    <property type="molecule type" value="mRNA"/>
</dbReference>
<dbReference type="PIR" id="T05102">
    <property type="entry name" value="T05102"/>
</dbReference>
<dbReference type="RefSeq" id="NP_194896.2">
    <property type="nucleotide sequence ID" value="NM_119317.3"/>
</dbReference>
<dbReference type="SMR" id="Q8H2D1"/>
<dbReference type="BioGRID" id="14582">
    <property type="interactions" value="1"/>
</dbReference>
<dbReference type="IntAct" id="Q8H2D1">
    <property type="interactions" value="1"/>
</dbReference>
<dbReference type="STRING" id="3702.Q8H2D1"/>
<dbReference type="PaxDb" id="3702-AT4G31680.1"/>
<dbReference type="EnsemblPlants" id="AT4G31680.1">
    <property type="protein sequence ID" value="AT4G31680.1"/>
    <property type="gene ID" value="AT4G31680"/>
</dbReference>
<dbReference type="GeneID" id="829296"/>
<dbReference type="Gramene" id="AT4G31680.1">
    <property type="protein sequence ID" value="AT4G31680.1"/>
    <property type="gene ID" value="AT4G31680"/>
</dbReference>
<dbReference type="KEGG" id="ath:AT4G31680"/>
<dbReference type="Araport" id="AT4G31680"/>
<dbReference type="TAIR" id="AT4G31680"/>
<dbReference type="eggNOG" id="ENOG502STJ8">
    <property type="taxonomic scope" value="Eukaryota"/>
</dbReference>
<dbReference type="HOGENOM" id="CLU_014437_0_0_1"/>
<dbReference type="InParanoid" id="Q8H2D1"/>
<dbReference type="OMA" id="CWHTERK"/>
<dbReference type="PhylomeDB" id="Q8H2D1"/>
<dbReference type="PRO" id="PR:Q8H2D1"/>
<dbReference type="Proteomes" id="UP000006548">
    <property type="component" value="Chromosome 4"/>
</dbReference>
<dbReference type="ExpressionAtlas" id="Q8H2D1">
    <property type="expression patterns" value="baseline and differential"/>
</dbReference>
<dbReference type="GO" id="GO:0005634">
    <property type="term" value="C:nucleus"/>
    <property type="evidence" value="ECO:0007669"/>
    <property type="project" value="UniProtKB-SubCell"/>
</dbReference>
<dbReference type="GO" id="GO:0003677">
    <property type="term" value="F:DNA binding"/>
    <property type="evidence" value="ECO:0007669"/>
    <property type="project" value="UniProtKB-KW"/>
</dbReference>
<dbReference type="CDD" id="cd10017">
    <property type="entry name" value="B3_DNA"/>
    <property type="match status" value="3"/>
</dbReference>
<dbReference type="FunFam" id="2.40.330.10:FF:000009">
    <property type="entry name" value="Transcriptional factor B3 family protein"/>
    <property type="match status" value="1"/>
</dbReference>
<dbReference type="Gene3D" id="2.40.330.10">
    <property type="entry name" value="DNA-binding pseudobarrel domain"/>
    <property type="match status" value="3"/>
</dbReference>
<dbReference type="InterPro" id="IPR003340">
    <property type="entry name" value="B3_DNA-bd"/>
</dbReference>
<dbReference type="InterPro" id="IPR015300">
    <property type="entry name" value="DNA-bd_pseudobarrel_sf"/>
</dbReference>
<dbReference type="InterPro" id="IPR039218">
    <property type="entry name" value="REM_fam"/>
</dbReference>
<dbReference type="PANTHER" id="PTHR31674">
    <property type="entry name" value="B3 DOMAIN-CONTAINING PROTEIN REM-LIKE 3-RELATED"/>
    <property type="match status" value="1"/>
</dbReference>
<dbReference type="PANTHER" id="PTHR31674:SF75">
    <property type="entry name" value="TF-B3 DOMAIN-CONTAINING PROTEIN"/>
    <property type="match status" value="1"/>
</dbReference>
<dbReference type="Pfam" id="PF02362">
    <property type="entry name" value="B3"/>
    <property type="match status" value="3"/>
</dbReference>
<dbReference type="SMART" id="SM01019">
    <property type="entry name" value="B3"/>
    <property type="match status" value="3"/>
</dbReference>
<dbReference type="SUPFAM" id="SSF101936">
    <property type="entry name" value="DNA-binding pseudobarrel domain"/>
    <property type="match status" value="3"/>
</dbReference>
<dbReference type="PROSITE" id="PS50863">
    <property type="entry name" value="B3"/>
    <property type="match status" value="3"/>
</dbReference>
<gene>
    <name type="primary">REM8</name>
    <name type="synonym">ARF24</name>
    <name type="ordered locus">At4g31680</name>
    <name type="ORF">F28M20.130</name>
</gene>
<evidence type="ECO:0000255" key="1">
    <source>
        <dbReference type="PROSITE-ProRule" id="PRU00326"/>
    </source>
</evidence>
<evidence type="ECO:0000256" key="2">
    <source>
        <dbReference type="SAM" id="MobiDB-lite"/>
    </source>
</evidence>
<evidence type="ECO:0000305" key="3"/>
<organism>
    <name type="scientific">Arabidopsis thaliana</name>
    <name type="common">Mouse-ear cress</name>
    <dbReference type="NCBI Taxonomy" id="3702"/>
    <lineage>
        <taxon>Eukaryota</taxon>
        <taxon>Viridiplantae</taxon>
        <taxon>Streptophyta</taxon>
        <taxon>Embryophyta</taxon>
        <taxon>Tracheophyta</taxon>
        <taxon>Spermatophyta</taxon>
        <taxon>Magnoliopsida</taxon>
        <taxon>eudicotyledons</taxon>
        <taxon>Gunneridae</taxon>
        <taxon>Pentapetalae</taxon>
        <taxon>rosids</taxon>
        <taxon>malvids</taxon>
        <taxon>Brassicales</taxon>
        <taxon>Brassicaceae</taxon>
        <taxon>Camelineae</taxon>
        <taxon>Arabidopsis</taxon>
    </lineage>
</organism>
<sequence>MANASQLSPTNKHFFKPLLPGFQRNLNIPVKFFSEHIEGKHEGETVKLRADASKRTWEVKMDGNRLTEGWKEFVEAHDLRIRDFVVFRHEGDMVFHVTALGPSCCEIQYPQSISHEEGEESGEVEISEREVEENLQKEYDQSSADLNCFSQSVTHSNISNDLVTLPRDFAKRNGLDKGMHEIVLMNEEGKSWESEVRSRMSGQVFIVGGWKSLCSENKLKGGDSCTFKLLQNAKTPVFQLCSRIGESRFVKLTPTLNSLEIGKQHLPVSFTKGNGLIHPGEIILVDKDRVEWSMKLQVDNRGGMHIFGGNDWKSFCAANEVGAGESLTLELIRGGLSPLFKFFSKIEQPSFEAEDRRHKRARVHNGSQETDKGEPSRATKMGPELEKREKTAEKGEPSRASNKSSGKQGNLQKTQACSVTDHVAKVKESVVDTLTSIRRFQAELETMEQKLEDSLQEINKLS</sequence>
<protein>
    <recommendedName>
        <fullName>B3 domain-containing protein REM8</fullName>
    </recommendedName>
    <alternativeName>
        <fullName>Auxin response factor 24</fullName>
    </alternativeName>
    <alternativeName>
        <fullName>Protein REPRODUCTIVE MERISTEM 8</fullName>
    </alternativeName>
</protein>
<accession>Q8H2D1</accession>
<accession>O81779</accession>